<feature type="chain" id="PRO_1000131778" description="Pole-localizer protein TmaR">
    <location>
        <begin position="1"/>
        <end position="111"/>
    </location>
</feature>
<feature type="coiled-coil region" evidence="1">
    <location>
        <begin position="14"/>
        <end position="41"/>
    </location>
</feature>
<protein>
    <recommendedName>
        <fullName evidence="1">Pole-localizer protein TmaR</fullName>
    </recommendedName>
</protein>
<keyword id="KW-0175">Coiled coil</keyword>
<keyword id="KW-0963">Cytoplasm</keyword>
<dbReference type="EMBL" id="CP001127">
    <property type="protein sequence ID" value="ACF92249.1"/>
    <property type="molecule type" value="Genomic_DNA"/>
</dbReference>
<dbReference type="RefSeq" id="WP_000450405.1">
    <property type="nucleotide sequence ID" value="NC_011094.1"/>
</dbReference>
<dbReference type="SMR" id="B4TMJ8"/>
<dbReference type="KEGG" id="sew:SeSA_A2229"/>
<dbReference type="HOGENOM" id="CLU_153146_0_0_6"/>
<dbReference type="Proteomes" id="UP000001865">
    <property type="component" value="Chromosome"/>
</dbReference>
<dbReference type="GO" id="GO:0005829">
    <property type="term" value="C:cytosol"/>
    <property type="evidence" value="ECO:0007669"/>
    <property type="project" value="TreeGrafter"/>
</dbReference>
<dbReference type="HAMAP" id="MF_00683">
    <property type="entry name" value="Pole_loc_TmaR"/>
    <property type="match status" value="1"/>
</dbReference>
<dbReference type="InterPro" id="IPR007458">
    <property type="entry name" value="DUF496"/>
</dbReference>
<dbReference type="InterPro" id="IPR053375">
    <property type="entry name" value="UPF0265"/>
</dbReference>
<dbReference type="NCBIfam" id="NF003844">
    <property type="entry name" value="PRK05423.1"/>
    <property type="match status" value="1"/>
</dbReference>
<dbReference type="NCBIfam" id="NF040881">
    <property type="entry name" value="PTS_reg_TmaR"/>
    <property type="match status" value="1"/>
</dbReference>
<dbReference type="PANTHER" id="PTHR39591">
    <property type="entry name" value="UPF0265 PROTEIN YEEX"/>
    <property type="match status" value="1"/>
</dbReference>
<dbReference type="PANTHER" id="PTHR39591:SF1">
    <property type="entry name" value="UPF0265 PROTEIN YEEX"/>
    <property type="match status" value="1"/>
</dbReference>
<dbReference type="Pfam" id="PF04363">
    <property type="entry name" value="DUF496"/>
    <property type="match status" value="1"/>
</dbReference>
<dbReference type="PIRSF" id="PIRSF028773">
    <property type="entry name" value="UCP028773"/>
    <property type="match status" value="1"/>
</dbReference>
<sequence>METTKPSFQDVLEFVRLFRRKNKLQREIQDIEKKIRDNQKRVLLLDNLSDYIKPGMSVEAIQGIIASMKSDYEDRVDDYIIKNAEISKERRDISKKLKAMGEMKHADVKAE</sequence>
<organism>
    <name type="scientific">Salmonella schwarzengrund (strain CVM19633)</name>
    <dbReference type="NCBI Taxonomy" id="439843"/>
    <lineage>
        <taxon>Bacteria</taxon>
        <taxon>Pseudomonadati</taxon>
        <taxon>Pseudomonadota</taxon>
        <taxon>Gammaproteobacteria</taxon>
        <taxon>Enterobacterales</taxon>
        <taxon>Enterobacteriaceae</taxon>
        <taxon>Salmonella</taxon>
    </lineage>
</organism>
<comment type="function">
    <text evidence="1">Pole-localizer protein involved in the regulation of several cellular processes.</text>
</comment>
<comment type="subcellular location">
    <subcellularLocation>
        <location evidence="1">Cytoplasm</location>
    </subcellularLocation>
    <text evidence="1">Forms clusters that localize mainly near one pole of the cell.</text>
</comment>
<comment type="similarity">
    <text evidence="1">Belongs to the pole-localizer TmaR family.</text>
</comment>
<evidence type="ECO:0000255" key="1">
    <source>
        <dbReference type="HAMAP-Rule" id="MF_00683"/>
    </source>
</evidence>
<reference key="1">
    <citation type="journal article" date="2011" name="J. Bacteriol.">
        <title>Comparative genomics of 28 Salmonella enterica isolates: evidence for CRISPR-mediated adaptive sublineage evolution.</title>
        <authorList>
            <person name="Fricke W.F."/>
            <person name="Mammel M.K."/>
            <person name="McDermott P.F."/>
            <person name="Tartera C."/>
            <person name="White D.G."/>
            <person name="Leclerc J.E."/>
            <person name="Ravel J."/>
            <person name="Cebula T.A."/>
        </authorList>
    </citation>
    <scope>NUCLEOTIDE SEQUENCE [LARGE SCALE GENOMIC DNA]</scope>
    <source>
        <strain>CVM19633</strain>
    </source>
</reference>
<name>TMAR_SALSV</name>
<accession>B4TMJ8</accession>
<gene>
    <name evidence="1" type="primary">tmaR</name>
    <name type="ordered locus">SeSA_A2229</name>
</gene>
<proteinExistence type="inferred from homology"/>